<name>YOSH_SCHPO</name>
<dbReference type="EMBL" id="CU329671">
    <property type="protein sequence ID" value="CAB76053.1"/>
    <property type="molecule type" value="Genomic_DNA"/>
</dbReference>
<dbReference type="PIR" id="T50361">
    <property type="entry name" value="T50361"/>
</dbReference>
<dbReference type="BioGRID" id="277016">
    <property type="interactions" value="3"/>
</dbReference>
<dbReference type="iPTMnet" id="Q9P7K7"/>
<dbReference type="PaxDb" id="4896-SPBC21C3.17c.1"/>
<dbReference type="EnsemblFungi" id="SPBC21C3.17c.1">
    <property type="protein sequence ID" value="SPBC21C3.17c.1:pep"/>
    <property type="gene ID" value="SPBC21C3.17c"/>
</dbReference>
<dbReference type="KEGG" id="spo:2540488"/>
<dbReference type="PomBase" id="SPBC21C3.17c"/>
<dbReference type="VEuPathDB" id="FungiDB:SPBC21C3.17c"/>
<dbReference type="HOGENOM" id="CLU_1441814_0_0_1"/>
<dbReference type="InParanoid" id="Q9P7K7"/>
<dbReference type="OMA" id="WAAGYTY"/>
<dbReference type="PRO" id="PR:Q9P7K7"/>
<dbReference type="Proteomes" id="UP000002485">
    <property type="component" value="Chromosome II"/>
</dbReference>
<dbReference type="GO" id="GO:0005794">
    <property type="term" value="C:Golgi apparatus"/>
    <property type="evidence" value="ECO:0000266"/>
    <property type="project" value="PomBase"/>
</dbReference>
<dbReference type="GO" id="GO:0016020">
    <property type="term" value="C:membrane"/>
    <property type="evidence" value="ECO:0007669"/>
    <property type="project" value="UniProtKB-SubCell"/>
</dbReference>
<dbReference type="GO" id="GO:0006888">
    <property type="term" value="P:endoplasmic reticulum to Golgi vesicle-mediated transport"/>
    <property type="evidence" value="ECO:0000255"/>
    <property type="project" value="PomBase"/>
</dbReference>
<dbReference type="InterPro" id="IPR028000">
    <property type="entry name" value="Pma1"/>
</dbReference>
<dbReference type="Pfam" id="PF14610">
    <property type="entry name" value="Psg1"/>
    <property type="match status" value="1"/>
</dbReference>
<protein>
    <recommendedName>
        <fullName>Uncharacterized protein C21C3.17c</fullName>
    </recommendedName>
</protein>
<accession>Q9P7K7</accession>
<evidence type="ECO:0000255" key="1"/>
<evidence type="ECO:0000305" key="2"/>
<gene>
    <name type="ORF">SPBC21C3.17c</name>
</gene>
<organism>
    <name type="scientific">Schizosaccharomyces pombe (strain 972 / ATCC 24843)</name>
    <name type="common">Fission yeast</name>
    <dbReference type="NCBI Taxonomy" id="284812"/>
    <lineage>
        <taxon>Eukaryota</taxon>
        <taxon>Fungi</taxon>
        <taxon>Dikarya</taxon>
        <taxon>Ascomycota</taxon>
        <taxon>Taphrinomycotina</taxon>
        <taxon>Schizosaccharomycetes</taxon>
        <taxon>Schizosaccharomycetales</taxon>
        <taxon>Schizosaccharomycetaceae</taxon>
        <taxon>Schizosaccharomyces</taxon>
    </lineage>
</organism>
<proteinExistence type="inferred from homology"/>
<keyword id="KW-0325">Glycoprotein</keyword>
<keyword id="KW-0472">Membrane</keyword>
<keyword id="KW-1185">Reference proteome</keyword>
<keyword id="KW-0732">Signal</keyword>
<keyword id="KW-0812">Transmembrane</keyword>
<keyword id="KW-1133">Transmembrane helix</keyword>
<reference key="1">
    <citation type="journal article" date="2002" name="Nature">
        <title>The genome sequence of Schizosaccharomyces pombe.</title>
        <authorList>
            <person name="Wood V."/>
            <person name="Gwilliam R."/>
            <person name="Rajandream M.A."/>
            <person name="Lyne M.H."/>
            <person name="Lyne R."/>
            <person name="Stewart A."/>
            <person name="Sgouros J.G."/>
            <person name="Peat N."/>
            <person name="Hayles J."/>
            <person name="Baker S.G."/>
            <person name="Basham D."/>
            <person name="Bowman S."/>
            <person name="Brooks K."/>
            <person name="Brown D."/>
            <person name="Brown S."/>
            <person name="Chillingworth T."/>
            <person name="Churcher C.M."/>
            <person name="Collins M."/>
            <person name="Connor R."/>
            <person name="Cronin A."/>
            <person name="Davis P."/>
            <person name="Feltwell T."/>
            <person name="Fraser A."/>
            <person name="Gentles S."/>
            <person name="Goble A."/>
            <person name="Hamlin N."/>
            <person name="Harris D.E."/>
            <person name="Hidalgo J."/>
            <person name="Hodgson G."/>
            <person name="Holroyd S."/>
            <person name="Hornsby T."/>
            <person name="Howarth S."/>
            <person name="Huckle E.J."/>
            <person name="Hunt S."/>
            <person name="Jagels K."/>
            <person name="James K.D."/>
            <person name="Jones L."/>
            <person name="Jones M."/>
            <person name="Leather S."/>
            <person name="McDonald S."/>
            <person name="McLean J."/>
            <person name="Mooney P."/>
            <person name="Moule S."/>
            <person name="Mungall K.L."/>
            <person name="Murphy L.D."/>
            <person name="Niblett D."/>
            <person name="Odell C."/>
            <person name="Oliver K."/>
            <person name="O'Neil S."/>
            <person name="Pearson D."/>
            <person name="Quail M.A."/>
            <person name="Rabbinowitsch E."/>
            <person name="Rutherford K.M."/>
            <person name="Rutter S."/>
            <person name="Saunders D."/>
            <person name="Seeger K."/>
            <person name="Sharp S."/>
            <person name="Skelton J."/>
            <person name="Simmonds M.N."/>
            <person name="Squares R."/>
            <person name="Squares S."/>
            <person name="Stevens K."/>
            <person name="Taylor K."/>
            <person name="Taylor R.G."/>
            <person name="Tivey A."/>
            <person name="Walsh S.V."/>
            <person name="Warren T."/>
            <person name="Whitehead S."/>
            <person name="Woodward J.R."/>
            <person name="Volckaert G."/>
            <person name="Aert R."/>
            <person name="Robben J."/>
            <person name="Grymonprez B."/>
            <person name="Weltjens I."/>
            <person name="Vanstreels E."/>
            <person name="Rieger M."/>
            <person name="Schaefer M."/>
            <person name="Mueller-Auer S."/>
            <person name="Gabel C."/>
            <person name="Fuchs M."/>
            <person name="Duesterhoeft A."/>
            <person name="Fritzc C."/>
            <person name="Holzer E."/>
            <person name="Moestl D."/>
            <person name="Hilbert H."/>
            <person name="Borzym K."/>
            <person name="Langer I."/>
            <person name="Beck A."/>
            <person name="Lehrach H."/>
            <person name="Reinhardt R."/>
            <person name="Pohl T.M."/>
            <person name="Eger P."/>
            <person name="Zimmermann W."/>
            <person name="Wedler H."/>
            <person name="Wambutt R."/>
            <person name="Purnelle B."/>
            <person name="Goffeau A."/>
            <person name="Cadieu E."/>
            <person name="Dreano S."/>
            <person name="Gloux S."/>
            <person name="Lelaure V."/>
            <person name="Mottier S."/>
            <person name="Galibert F."/>
            <person name="Aves S.J."/>
            <person name="Xiang Z."/>
            <person name="Hunt C."/>
            <person name="Moore K."/>
            <person name="Hurst S.M."/>
            <person name="Lucas M."/>
            <person name="Rochet M."/>
            <person name="Gaillardin C."/>
            <person name="Tallada V.A."/>
            <person name="Garzon A."/>
            <person name="Thode G."/>
            <person name="Daga R.R."/>
            <person name="Cruzado L."/>
            <person name="Jimenez J."/>
            <person name="Sanchez M."/>
            <person name="del Rey F."/>
            <person name="Benito J."/>
            <person name="Dominguez A."/>
            <person name="Revuelta J.L."/>
            <person name="Moreno S."/>
            <person name="Armstrong J."/>
            <person name="Forsburg S.L."/>
            <person name="Cerutti L."/>
            <person name="Lowe T."/>
            <person name="McCombie W.R."/>
            <person name="Paulsen I."/>
            <person name="Potashkin J."/>
            <person name="Shpakovski G.V."/>
            <person name="Ussery D."/>
            <person name="Barrell B.G."/>
            <person name="Nurse P."/>
        </authorList>
    </citation>
    <scope>NUCLEOTIDE SEQUENCE [LARGE SCALE GENOMIC DNA]</scope>
    <source>
        <strain>972 / ATCC 24843</strain>
    </source>
</reference>
<feature type="signal peptide" evidence="1">
    <location>
        <begin position="1"/>
        <end position="21"/>
    </location>
</feature>
<feature type="chain" id="PRO_0000014215" description="Uncharacterized protein C21C3.17c">
    <location>
        <begin position="22"/>
        <end position="186"/>
    </location>
</feature>
<feature type="topological domain" description="Extracellular" evidence="1">
    <location>
        <begin position="22"/>
        <end position="142"/>
    </location>
</feature>
<feature type="transmembrane region" description="Helical" evidence="1">
    <location>
        <begin position="143"/>
        <end position="163"/>
    </location>
</feature>
<feature type="topological domain" description="Cytoplasmic" evidence="1">
    <location>
        <begin position="164"/>
        <end position="186"/>
    </location>
</feature>
<feature type="glycosylation site" description="N-linked (GlcNAc...) asparagine" evidence="1">
    <location>
        <position position="62"/>
    </location>
</feature>
<feature type="glycosylation site" description="N-linked (GlcNAc...) asparagine" evidence="1">
    <location>
        <position position="75"/>
    </location>
</feature>
<feature type="glycosylation site" description="N-linked (GlcNAc...) asparagine" evidence="1">
    <location>
        <position position="93"/>
    </location>
</feature>
<feature type="glycosylation site" description="N-linked (GlcNAc...) asparagine" evidence="1">
    <location>
        <position position="104"/>
    </location>
</feature>
<sequence>MKFFLGSALFLILTFINLVRAEFEFITPAEDSRWARGFTYAVKWKQPTEQFVEIALQYADSNNTLITSSGVIPSNQTYWMVKIDKKWLMKMDNITARVVAVPQNGTASTVYVGPQVLLANTFYWKMVVDVSPAFSVNPIDKKLAIGLSVGLSCCILIVLFLHFATRRERRILKNEKELEMSSYRKH</sequence>
<comment type="subcellular location">
    <subcellularLocation>
        <location evidence="2">Membrane</location>
        <topology evidence="2">Single-pass type I membrane protein</topology>
    </subcellularLocation>
</comment>